<reference key="1">
    <citation type="journal article" date="2005" name="Mol. Genet. Genomics">
        <title>A fine physical map of the rice chromosome 5.</title>
        <authorList>
            <person name="Cheng C.-H."/>
            <person name="Chung M.C."/>
            <person name="Liu S.-M."/>
            <person name="Chen S.-K."/>
            <person name="Kao F.Y."/>
            <person name="Lin S.-J."/>
            <person name="Hsiao S.-H."/>
            <person name="Tseng I.C."/>
            <person name="Hsing Y.-I.C."/>
            <person name="Wu H.-P."/>
            <person name="Chen C.-S."/>
            <person name="Shaw J.-F."/>
            <person name="Wu J."/>
            <person name="Matsumoto T."/>
            <person name="Sasaki T."/>
            <person name="Chen H.-C."/>
            <person name="Chow T.-Y."/>
        </authorList>
    </citation>
    <scope>NUCLEOTIDE SEQUENCE [LARGE SCALE GENOMIC DNA]</scope>
    <source>
        <strain>cv. Nipponbare</strain>
    </source>
</reference>
<reference key="2">
    <citation type="journal article" date="2005" name="Nature">
        <title>The map-based sequence of the rice genome.</title>
        <authorList>
            <consortium name="International rice genome sequencing project (IRGSP)"/>
        </authorList>
    </citation>
    <scope>NUCLEOTIDE SEQUENCE [LARGE SCALE GENOMIC DNA]</scope>
    <source>
        <strain>cv. Nipponbare</strain>
    </source>
</reference>
<reference key="3">
    <citation type="journal article" date="2013" name="Rice">
        <title>Improvement of the Oryza sativa Nipponbare reference genome using next generation sequence and optical map data.</title>
        <authorList>
            <person name="Kawahara Y."/>
            <person name="de la Bastide M."/>
            <person name="Hamilton J.P."/>
            <person name="Kanamori H."/>
            <person name="McCombie W.R."/>
            <person name="Ouyang S."/>
            <person name="Schwartz D.C."/>
            <person name="Tanaka T."/>
            <person name="Wu J."/>
            <person name="Zhou S."/>
            <person name="Childs K.L."/>
            <person name="Davidson R.M."/>
            <person name="Lin H."/>
            <person name="Quesada-Ocampo L."/>
            <person name="Vaillancourt B."/>
            <person name="Sakai H."/>
            <person name="Lee S.S."/>
            <person name="Kim J."/>
            <person name="Numa H."/>
            <person name="Itoh T."/>
            <person name="Buell C.R."/>
            <person name="Matsumoto T."/>
        </authorList>
    </citation>
    <scope>GENOME REANNOTATION</scope>
    <source>
        <strain>cv. Nipponbare</strain>
    </source>
</reference>
<reference key="4">
    <citation type="journal article" date="2003" name="Science">
        <title>Collection, mapping, and annotation of over 28,000 cDNA clones from japonica rice.</title>
        <authorList>
            <consortium name="The rice full-length cDNA consortium"/>
        </authorList>
    </citation>
    <scope>NUCLEOTIDE SEQUENCE [LARGE SCALE MRNA]</scope>
    <source>
        <strain>cv. Nipponbare</strain>
    </source>
</reference>
<reference key="5">
    <citation type="journal article" date="2006" name="Funct. Integr. Genomics">
        <title>The auxin-responsive GH3 gene family in rice (Oryza sativa).</title>
        <authorList>
            <person name="Jain M."/>
            <person name="Kaur N."/>
            <person name="Tyagi A.K."/>
            <person name="Khurana J.P."/>
        </authorList>
    </citation>
    <scope>TISSUE SPECIFICITY</scope>
    <scope>INDUCTION</scope>
    <scope>NOMENCLATURE</scope>
</reference>
<dbReference type="EC" id="6.3.2.-"/>
<dbReference type="EMBL" id="AC104283">
    <property type="protein sequence ID" value="AAU90198.1"/>
    <property type="status" value="ALT_SEQ"/>
    <property type="molecule type" value="Genomic_DNA"/>
</dbReference>
<dbReference type="EMBL" id="AP014961">
    <property type="status" value="NOT_ANNOTATED_CDS"/>
    <property type="molecule type" value="Genomic_DNA"/>
</dbReference>
<dbReference type="EMBL" id="AK106538">
    <property type="status" value="NOT_ANNOTATED_CDS"/>
    <property type="molecule type" value="mRNA"/>
</dbReference>
<dbReference type="SMR" id="Q60EY1"/>
<dbReference type="FunCoup" id="Q60EY1">
    <property type="interactions" value="126"/>
</dbReference>
<dbReference type="STRING" id="39947.Q60EY1"/>
<dbReference type="PaxDb" id="39947-Q60EY1"/>
<dbReference type="eggNOG" id="ENOG502QS9M">
    <property type="taxonomic scope" value="Eukaryota"/>
</dbReference>
<dbReference type="InParanoid" id="Q60EY1"/>
<dbReference type="PlantReactome" id="R-OSA-6787011">
    <property type="pathway name" value="Jasmonic acid signaling"/>
</dbReference>
<dbReference type="Proteomes" id="UP000000763">
    <property type="component" value="Chromosome 5"/>
</dbReference>
<dbReference type="Proteomes" id="UP000059680">
    <property type="component" value="Chromosome 5"/>
</dbReference>
<dbReference type="GO" id="GO:0005737">
    <property type="term" value="C:cytoplasm"/>
    <property type="evidence" value="ECO:0000318"/>
    <property type="project" value="GO_Central"/>
</dbReference>
<dbReference type="GO" id="GO:0016881">
    <property type="term" value="F:acid-amino acid ligase activity"/>
    <property type="evidence" value="ECO:0000318"/>
    <property type="project" value="GO_Central"/>
</dbReference>
<dbReference type="GO" id="GO:0009733">
    <property type="term" value="P:response to auxin"/>
    <property type="evidence" value="ECO:0000305"/>
    <property type="project" value="Gramene"/>
</dbReference>
<dbReference type="GO" id="GO:0009416">
    <property type="term" value="P:response to light stimulus"/>
    <property type="evidence" value="ECO:0000305"/>
    <property type="project" value="Gramene"/>
</dbReference>
<dbReference type="InterPro" id="IPR004993">
    <property type="entry name" value="GH3"/>
</dbReference>
<dbReference type="InterPro" id="IPR055378">
    <property type="entry name" value="GH3_C"/>
</dbReference>
<dbReference type="InterPro" id="IPR055377">
    <property type="entry name" value="GH3_M"/>
</dbReference>
<dbReference type="PANTHER" id="PTHR31901">
    <property type="entry name" value="GH3 DOMAIN-CONTAINING PROTEIN"/>
    <property type="match status" value="1"/>
</dbReference>
<dbReference type="PANTHER" id="PTHR31901:SF44">
    <property type="entry name" value="INDOLE-3-ACETIC ACID-AMIDO SYNTHETASE GH3.6-RELATED"/>
    <property type="match status" value="1"/>
</dbReference>
<dbReference type="Pfam" id="PF03321">
    <property type="entry name" value="GH3"/>
    <property type="match status" value="1"/>
</dbReference>
<dbReference type="Pfam" id="PF23572">
    <property type="entry name" value="GH3_C"/>
    <property type="match status" value="1"/>
</dbReference>
<dbReference type="Pfam" id="PF23571">
    <property type="entry name" value="GH3_M"/>
    <property type="match status" value="1"/>
</dbReference>
<sequence>MAATAWGIRSSGIRGASPVMSACVSPAEVILGADHQQQMYCHLLCGLRRWDAVDCIRAPYAAALARALRLLQSKWRQLCDDLECGTVCADVVTDAAMRGAVQDGVLAGPCPELAGRVRRICERDDWRGVLRQLWPDARYISCVTTGTMEQYFPAIKHFAGEALPVLGTDYLASECAIGINLERTSPPEETTYVLLPRAAYFEFIPFDMDAAGRGAAAAEPVDIAGVEAGKTYELVATTFRGLYRYKVGDVVKIAGFHHSSPRLQFVTRAPPPQEHGEVLTERDVMAAMDTFQLMLKDGGEVIEFAAFIIDGDGGQRRRRCATIAVEVSNGSKLLDHERSAAFLRRCTAPLEGCLGGAYRLSRATGDVAPLEVAVVRPGTFDRLAEAAIRGGAPANQYKPPRSSGTGTSSMCCNPPWCAAAAQSLNQLLTSICLIVSLNQRQFLDRESNSGTDKVFISDSILNFQHWGGFSLRFDLQEESLTLYKDHPS</sequence>
<organism>
    <name type="scientific">Oryza sativa subsp. japonica</name>
    <name type="common">Rice</name>
    <dbReference type="NCBI Taxonomy" id="39947"/>
    <lineage>
        <taxon>Eukaryota</taxon>
        <taxon>Viridiplantae</taxon>
        <taxon>Streptophyta</taxon>
        <taxon>Embryophyta</taxon>
        <taxon>Tracheophyta</taxon>
        <taxon>Spermatophyta</taxon>
        <taxon>Magnoliopsida</taxon>
        <taxon>Liliopsida</taxon>
        <taxon>Poales</taxon>
        <taxon>Poaceae</taxon>
        <taxon>BOP clade</taxon>
        <taxon>Oryzoideae</taxon>
        <taxon>Oryzeae</taxon>
        <taxon>Oryzinae</taxon>
        <taxon>Oryza</taxon>
        <taxon>Oryza sativa</taxon>
    </lineage>
</organism>
<gene>
    <name type="primary">GH3.6</name>
    <name type="ordered locus">Os05g0143800</name>
    <name type="ordered locus">LOC_Os05g05180</name>
    <name type="ORF">OJ1607_F09.5</name>
</gene>
<accession>Q60EY1</accession>
<feature type="chain" id="PRO_0000203583" description="Probable indole-3-acetic acid-amido synthetase GH3.6">
    <location>
        <begin position="1"/>
        <end position="488"/>
    </location>
</feature>
<name>GH36_ORYSJ</name>
<evidence type="ECO:0000250" key="1"/>
<evidence type="ECO:0000269" key="2">
    <source>
    </source>
</evidence>
<evidence type="ECO:0000305" key="3"/>
<comment type="function">
    <text evidence="1">May catalyze the synthesis of indole-3-acetic acid (IAA)-amino acid conjugates, providing a mechanism for the plant to cope with the presence of excess auxin.</text>
</comment>
<comment type="tissue specificity">
    <text evidence="2">Expressed in roots and callus.</text>
</comment>
<comment type="induction">
    <text evidence="2">At low level by auxin.</text>
</comment>
<comment type="similarity">
    <text evidence="3">Belongs to the IAA-amido conjugating enzyme family.</text>
</comment>
<comment type="sequence caution" evidence="3">
    <conflict type="erroneous gene model prediction">
        <sequence resource="EMBL-CDS" id="AAU90198"/>
    </conflict>
</comment>
<proteinExistence type="evidence at transcript level"/>
<keyword id="KW-0436">Ligase</keyword>
<keyword id="KW-1185">Reference proteome</keyword>
<protein>
    <recommendedName>
        <fullName>Probable indole-3-acetic acid-amido synthetase GH3.6</fullName>
        <ecNumber>6.3.2.-</ecNumber>
    </recommendedName>
    <alternativeName>
        <fullName>Auxin-responsive GH3-like protein 6</fullName>
        <shortName>OsGH3-6</shortName>
    </alternativeName>
</protein>